<sequence length="467" mass="51617">MSLHLYNTLHRRVEPFEPLDPACPTMYVCGPTVYNYVHIGNARGPVVFGVLAALLRRRYGALRYARNITDVDDKINTAAQEQGVPISAITERFCAAYREDMKKLGVEPPDIEPEATAHMPQIIAMIEQLIERQHAYVAMEHVLFAVNSFADYGQLSRRDPEEMLAGARVEIAPYKRDPSDFVLWKPSSDQLPGWDSPWGRGRPGWHIECSAMAAAHLGETIDIHAGGIDLQFPHHENEIAQSRCAHGSSTFARVWMHNGMLNFEGAKMSKSLGNIETVHGLVAKHPPEALRYALLSAHYRKPLDWSEALIAQSVRTLNRLYGTLRDLAAYPAHPFIPGNIEAALDDDLNTPQALAELATLANEARIQLADTTHHAAAEVTAALTRLKAELLGAGLALGLLQQTPEAWFSQGTNESDETHIQALIDARGAAKQARDFVRADAIRAQLAAEGIVLEDTPHGVRWMKQHT</sequence>
<dbReference type="EC" id="6.1.1.16" evidence="1"/>
<dbReference type="EMBL" id="AE003849">
    <property type="protein sequence ID" value="AAF83805.1"/>
    <property type="status" value="ALT_INIT"/>
    <property type="molecule type" value="Genomic_DNA"/>
</dbReference>
<dbReference type="PIR" id="C82737">
    <property type="entry name" value="C82737"/>
</dbReference>
<dbReference type="RefSeq" id="WP_042463000.1">
    <property type="nucleotide sequence ID" value="NC_002488.3"/>
</dbReference>
<dbReference type="SMR" id="Q9PEN3"/>
<dbReference type="STRING" id="160492.XF_0995"/>
<dbReference type="KEGG" id="xfa:XF_0995"/>
<dbReference type="PATRIC" id="fig|160492.11.peg.1064"/>
<dbReference type="eggNOG" id="COG0215">
    <property type="taxonomic scope" value="Bacteria"/>
</dbReference>
<dbReference type="HOGENOM" id="CLU_013528_0_1_6"/>
<dbReference type="Proteomes" id="UP000000812">
    <property type="component" value="Chromosome"/>
</dbReference>
<dbReference type="GO" id="GO:0005829">
    <property type="term" value="C:cytosol"/>
    <property type="evidence" value="ECO:0007669"/>
    <property type="project" value="TreeGrafter"/>
</dbReference>
<dbReference type="GO" id="GO:0005524">
    <property type="term" value="F:ATP binding"/>
    <property type="evidence" value="ECO:0007669"/>
    <property type="project" value="UniProtKB-UniRule"/>
</dbReference>
<dbReference type="GO" id="GO:0004817">
    <property type="term" value="F:cysteine-tRNA ligase activity"/>
    <property type="evidence" value="ECO:0007669"/>
    <property type="project" value="UniProtKB-UniRule"/>
</dbReference>
<dbReference type="GO" id="GO:0008270">
    <property type="term" value="F:zinc ion binding"/>
    <property type="evidence" value="ECO:0007669"/>
    <property type="project" value="UniProtKB-UniRule"/>
</dbReference>
<dbReference type="GO" id="GO:0006423">
    <property type="term" value="P:cysteinyl-tRNA aminoacylation"/>
    <property type="evidence" value="ECO:0007669"/>
    <property type="project" value="UniProtKB-UniRule"/>
</dbReference>
<dbReference type="CDD" id="cd00672">
    <property type="entry name" value="CysRS_core"/>
    <property type="match status" value="1"/>
</dbReference>
<dbReference type="FunFam" id="3.40.50.620:FF:000068">
    <property type="entry name" value="Cysteine--tRNA ligase"/>
    <property type="match status" value="1"/>
</dbReference>
<dbReference type="Gene3D" id="1.20.120.1910">
    <property type="entry name" value="Cysteine-tRNA ligase, C-terminal anti-codon recognition domain"/>
    <property type="match status" value="1"/>
</dbReference>
<dbReference type="Gene3D" id="3.40.50.620">
    <property type="entry name" value="HUPs"/>
    <property type="match status" value="1"/>
</dbReference>
<dbReference type="HAMAP" id="MF_00041">
    <property type="entry name" value="Cys_tRNA_synth"/>
    <property type="match status" value="1"/>
</dbReference>
<dbReference type="InterPro" id="IPR015803">
    <property type="entry name" value="Cys-tRNA-ligase"/>
</dbReference>
<dbReference type="InterPro" id="IPR015273">
    <property type="entry name" value="Cys-tRNA-synt_Ia_DALR"/>
</dbReference>
<dbReference type="InterPro" id="IPR024909">
    <property type="entry name" value="Cys-tRNA/MSH_ligase"/>
</dbReference>
<dbReference type="InterPro" id="IPR014729">
    <property type="entry name" value="Rossmann-like_a/b/a_fold"/>
</dbReference>
<dbReference type="InterPro" id="IPR032678">
    <property type="entry name" value="tRNA-synt_1_cat_dom"/>
</dbReference>
<dbReference type="InterPro" id="IPR009080">
    <property type="entry name" value="tRNAsynth_Ia_anticodon-bd"/>
</dbReference>
<dbReference type="NCBIfam" id="TIGR00435">
    <property type="entry name" value="cysS"/>
    <property type="match status" value="1"/>
</dbReference>
<dbReference type="PANTHER" id="PTHR10890:SF3">
    <property type="entry name" value="CYSTEINE--TRNA LIGASE, CYTOPLASMIC"/>
    <property type="match status" value="1"/>
</dbReference>
<dbReference type="PANTHER" id="PTHR10890">
    <property type="entry name" value="CYSTEINYL-TRNA SYNTHETASE"/>
    <property type="match status" value="1"/>
</dbReference>
<dbReference type="Pfam" id="PF09190">
    <property type="entry name" value="DALR_2"/>
    <property type="match status" value="1"/>
</dbReference>
<dbReference type="Pfam" id="PF01406">
    <property type="entry name" value="tRNA-synt_1e"/>
    <property type="match status" value="1"/>
</dbReference>
<dbReference type="PRINTS" id="PR00983">
    <property type="entry name" value="TRNASYNTHCYS"/>
</dbReference>
<dbReference type="SMART" id="SM00840">
    <property type="entry name" value="DALR_2"/>
    <property type="match status" value="1"/>
</dbReference>
<dbReference type="SUPFAM" id="SSF47323">
    <property type="entry name" value="Anticodon-binding domain of a subclass of class I aminoacyl-tRNA synthetases"/>
    <property type="match status" value="1"/>
</dbReference>
<dbReference type="SUPFAM" id="SSF52374">
    <property type="entry name" value="Nucleotidylyl transferase"/>
    <property type="match status" value="1"/>
</dbReference>
<organism>
    <name type="scientific">Xylella fastidiosa (strain 9a5c)</name>
    <dbReference type="NCBI Taxonomy" id="160492"/>
    <lineage>
        <taxon>Bacteria</taxon>
        <taxon>Pseudomonadati</taxon>
        <taxon>Pseudomonadota</taxon>
        <taxon>Gammaproteobacteria</taxon>
        <taxon>Lysobacterales</taxon>
        <taxon>Lysobacteraceae</taxon>
        <taxon>Xylella</taxon>
    </lineage>
</organism>
<comment type="catalytic activity">
    <reaction evidence="1">
        <text>tRNA(Cys) + L-cysteine + ATP = L-cysteinyl-tRNA(Cys) + AMP + diphosphate</text>
        <dbReference type="Rhea" id="RHEA:17773"/>
        <dbReference type="Rhea" id="RHEA-COMP:9661"/>
        <dbReference type="Rhea" id="RHEA-COMP:9679"/>
        <dbReference type="ChEBI" id="CHEBI:30616"/>
        <dbReference type="ChEBI" id="CHEBI:33019"/>
        <dbReference type="ChEBI" id="CHEBI:35235"/>
        <dbReference type="ChEBI" id="CHEBI:78442"/>
        <dbReference type="ChEBI" id="CHEBI:78517"/>
        <dbReference type="ChEBI" id="CHEBI:456215"/>
        <dbReference type="EC" id="6.1.1.16"/>
    </reaction>
</comment>
<comment type="cofactor">
    <cofactor evidence="1">
        <name>Zn(2+)</name>
        <dbReference type="ChEBI" id="CHEBI:29105"/>
    </cofactor>
    <text evidence="1">Binds 1 zinc ion per subunit.</text>
</comment>
<comment type="subunit">
    <text evidence="1">Monomer.</text>
</comment>
<comment type="subcellular location">
    <subcellularLocation>
        <location evidence="1">Cytoplasm</location>
    </subcellularLocation>
</comment>
<comment type="similarity">
    <text evidence="1">Belongs to the class-I aminoacyl-tRNA synthetase family.</text>
</comment>
<comment type="sequence caution" evidence="2">
    <conflict type="erroneous initiation">
        <sequence resource="EMBL-CDS" id="AAF83805"/>
    </conflict>
</comment>
<protein>
    <recommendedName>
        <fullName evidence="1">Cysteine--tRNA ligase</fullName>
        <ecNumber evidence="1">6.1.1.16</ecNumber>
    </recommendedName>
    <alternativeName>
        <fullName evidence="1">Cysteinyl-tRNA synthetase</fullName>
        <shortName evidence="1">CysRS</shortName>
    </alternativeName>
</protein>
<proteinExistence type="inferred from homology"/>
<gene>
    <name evidence="1" type="primary">cysS</name>
    <name type="ordered locus">XF_0995</name>
</gene>
<keyword id="KW-0030">Aminoacyl-tRNA synthetase</keyword>
<keyword id="KW-0067">ATP-binding</keyword>
<keyword id="KW-0963">Cytoplasm</keyword>
<keyword id="KW-0436">Ligase</keyword>
<keyword id="KW-0479">Metal-binding</keyword>
<keyword id="KW-0547">Nucleotide-binding</keyword>
<keyword id="KW-0648">Protein biosynthesis</keyword>
<keyword id="KW-0862">Zinc</keyword>
<name>SYC_XYLFA</name>
<evidence type="ECO:0000255" key="1">
    <source>
        <dbReference type="HAMAP-Rule" id="MF_00041"/>
    </source>
</evidence>
<evidence type="ECO:0000305" key="2"/>
<reference key="1">
    <citation type="journal article" date="2000" name="Nature">
        <title>The genome sequence of the plant pathogen Xylella fastidiosa.</title>
        <authorList>
            <person name="Simpson A.J.G."/>
            <person name="Reinach F.C."/>
            <person name="Arruda P."/>
            <person name="Abreu F.A."/>
            <person name="Acencio M."/>
            <person name="Alvarenga R."/>
            <person name="Alves L.M.C."/>
            <person name="Araya J.E."/>
            <person name="Baia G.S."/>
            <person name="Baptista C.S."/>
            <person name="Barros M.H."/>
            <person name="Bonaccorsi E.D."/>
            <person name="Bordin S."/>
            <person name="Bove J.M."/>
            <person name="Briones M.R.S."/>
            <person name="Bueno M.R.P."/>
            <person name="Camargo A.A."/>
            <person name="Camargo L.E.A."/>
            <person name="Carraro D.M."/>
            <person name="Carrer H."/>
            <person name="Colauto N.B."/>
            <person name="Colombo C."/>
            <person name="Costa F.F."/>
            <person name="Costa M.C.R."/>
            <person name="Costa-Neto C.M."/>
            <person name="Coutinho L.L."/>
            <person name="Cristofani M."/>
            <person name="Dias-Neto E."/>
            <person name="Docena C."/>
            <person name="El-Dorry H."/>
            <person name="Facincani A.P."/>
            <person name="Ferreira A.J.S."/>
            <person name="Ferreira V.C.A."/>
            <person name="Ferro J.A."/>
            <person name="Fraga J.S."/>
            <person name="Franca S.C."/>
            <person name="Franco M.C."/>
            <person name="Frohme M."/>
            <person name="Furlan L.R."/>
            <person name="Garnier M."/>
            <person name="Goldman G.H."/>
            <person name="Goldman M.H.S."/>
            <person name="Gomes S.L."/>
            <person name="Gruber A."/>
            <person name="Ho P.L."/>
            <person name="Hoheisel J.D."/>
            <person name="Junqueira M.L."/>
            <person name="Kemper E.L."/>
            <person name="Kitajima J.P."/>
            <person name="Krieger J.E."/>
            <person name="Kuramae E.E."/>
            <person name="Laigret F."/>
            <person name="Lambais M.R."/>
            <person name="Leite L.C.C."/>
            <person name="Lemos E.G.M."/>
            <person name="Lemos M.V.F."/>
            <person name="Lopes S.A."/>
            <person name="Lopes C.R."/>
            <person name="Machado J.A."/>
            <person name="Machado M.A."/>
            <person name="Madeira A.M.B.N."/>
            <person name="Madeira H.M.F."/>
            <person name="Marino C.L."/>
            <person name="Marques M.V."/>
            <person name="Martins E.A.L."/>
            <person name="Martins E.M.F."/>
            <person name="Matsukuma A.Y."/>
            <person name="Menck C.F.M."/>
            <person name="Miracca E.C."/>
            <person name="Miyaki C.Y."/>
            <person name="Monteiro-Vitorello C.B."/>
            <person name="Moon D.H."/>
            <person name="Nagai M.A."/>
            <person name="Nascimento A.L.T.O."/>
            <person name="Netto L.E.S."/>
            <person name="Nhani A. Jr."/>
            <person name="Nobrega F.G."/>
            <person name="Nunes L.R."/>
            <person name="Oliveira M.A."/>
            <person name="de Oliveira M.C."/>
            <person name="de Oliveira R.C."/>
            <person name="Palmieri D.A."/>
            <person name="Paris A."/>
            <person name="Peixoto B.R."/>
            <person name="Pereira G.A.G."/>
            <person name="Pereira H.A. Jr."/>
            <person name="Pesquero J.B."/>
            <person name="Quaggio R.B."/>
            <person name="Roberto P.G."/>
            <person name="Rodrigues V."/>
            <person name="de Rosa A.J.M."/>
            <person name="de Rosa V.E. Jr."/>
            <person name="de Sa R.G."/>
            <person name="Santelli R.V."/>
            <person name="Sawasaki H.E."/>
            <person name="da Silva A.C.R."/>
            <person name="da Silva A.M."/>
            <person name="da Silva F.R."/>
            <person name="Silva W.A. Jr."/>
            <person name="da Silveira J.F."/>
            <person name="Silvestri M.L.Z."/>
            <person name="Siqueira W.J."/>
            <person name="de Souza A.A."/>
            <person name="de Souza A.P."/>
            <person name="Terenzi M.F."/>
            <person name="Truffi D."/>
            <person name="Tsai S.M."/>
            <person name="Tsuhako M.H."/>
            <person name="Vallada H."/>
            <person name="Van Sluys M.A."/>
            <person name="Verjovski-Almeida S."/>
            <person name="Vettore A.L."/>
            <person name="Zago M.A."/>
            <person name="Zatz M."/>
            <person name="Meidanis J."/>
            <person name="Setubal J.C."/>
        </authorList>
    </citation>
    <scope>NUCLEOTIDE SEQUENCE [LARGE SCALE GENOMIC DNA]</scope>
    <source>
        <strain>9a5c</strain>
    </source>
</reference>
<accession>Q9PEN3</accession>
<feature type="chain" id="PRO_0000159527" description="Cysteine--tRNA ligase">
    <location>
        <begin position="1"/>
        <end position="467"/>
    </location>
</feature>
<feature type="short sequence motif" description="'HIGH' region">
    <location>
        <begin position="31"/>
        <end position="41"/>
    </location>
</feature>
<feature type="short sequence motif" description="'KMSKS' region">
    <location>
        <begin position="267"/>
        <end position="271"/>
    </location>
</feature>
<feature type="binding site" evidence="1">
    <location>
        <position position="29"/>
    </location>
    <ligand>
        <name>Zn(2+)</name>
        <dbReference type="ChEBI" id="CHEBI:29105"/>
    </ligand>
</feature>
<feature type="binding site" evidence="1">
    <location>
        <position position="209"/>
    </location>
    <ligand>
        <name>Zn(2+)</name>
        <dbReference type="ChEBI" id="CHEBI:29105"/>
    </ligand>
</feature>
<feature type="binding site" evidence="1">
    <location>
        <position position="234"/>
    </location>
    <ligand>
        <name>Zn(2+)</name>
        <dbReference type="ChEBI" id="CHEBI:29105"/>
    </ligand>
</feature>
<feature type="binding site" evidence="1">
    <location>
        <position position="238"/>
    </location>
    <ligand>
        <name>Zn(2+)</name>
        <dbReference type="ChEBI" id="CHEBI:29105"/>
    </ligand>
</feature>
<feature type="binding site" evidence="1">
    <location>
        <position position="270"/>
    </location>
    <ligand>
        <name>ATP</name>
        <dbReference type="ChEBI" id="CHEBI:30616"/>
    </ligand>
</feature>